<name>013R_FRG3G</name>
<feature type="chain" id="PRO_0000410562" description="Uncharacterized protein 013R">
    <location>
        <begin position="1"/>
        <end position="68"/>
    </location>
</feature>
<organismHost>
    <name type="scientific">Dryophytes versicolor</name>
    <name type="common">chameleon treefrog</name>
    <dbReference type="NCBI Taxonomy" id="30343"/>
</organismHost>
<organismHost>
    <name type="scientific">Lithobates pipiens</name>
    <name type="common">Northern leopard frog</name>
    <name type="synonym">Rana pipiens</name>
    <dbReference type="NCBI Taxonomy" id="8404"/>
</organismHost>
<organismHost>
    <name type="scientific">Lithobates sylvaticus</name>
    <name type="common">Wood frog</name>
    <name type="synonym">Rana sylvatica</name>
    <dbReference type="NCBI Taxonomy" id="45438"/>
</organismHost>
<organismHost>
    <name type="scientific">Notophthalmus viridescens</name>
    <name type="common">Eastern newt</name>
    <name type="synonym">Triturus viridescens</name>
    <dbReference type="NCBI Taxonomy" id="8316"/>
</organismHost>
<protein>
    <recommendedName>
        <fullName>Uncharacterized protein 013R</fullName>
    </recommendedName>
</protein>
<dbReference type="EMBL" id="AY548484">
    <property type="protein sequence ID" value="AAT09672.1"/>
    <property type="molecule type" value="Genomic_DNA"/>
</dbReference>
<dbReference type="RefSeq" id="YP_031591.1">
    <property type="nucleotide sequence ID" value="NC_005946.1"/>
</dbReference>
<dbReference type="KEGG" id="vg:2947785"/>
<dbReference type="Proteomes" id="UP000008770">
    <property type="component" value="Segment"/>
</dbReference>
<gene>
    <name type="ORF">FV3-013R</name>
</gene>
<proteinExistence type="predicted"/>
<reference key="1">
    <citation type="journal article" date="2004" name="Virology">
        <title>Comparative genomic analyses of frog virus 3, type species of the genus Ranavirus (family Iridoviridae).</title>
        <authorList>
            <person name="Tan W.G."/>
            <person name="Barkman T.J."/>
            <person name="Gregory Chinchar V."/>
            <person name="Essani K."/>
        </authorList>
    </citation>
    <scope>NUCLEOTIDE SEQUENCE [LARGE SCALE GENOMIC DNA]</scope>
</reference>
<sequence>MANSVAFSSMTWYSPLASDNLYDICVDKVHNRVLCLCHSFGCCTNAVVIWILPSFDEFTPQTLSCKGP</sequence>
<organism>
    <name type="scientific">Frog virus 3 (isolate Goorha)</name>
    <name type="common">FV-3</name>
    <dbReference type="NCBI Taxonomy" id="654924"/>
    <lineage>
        <taxon>Viruses</taxon>
        <taxon>Varidnaviria</taxon>
        <taxon>Bamfordvirae</taxon>
        <taxon>Nucleocytoviricota</taxon>
        <taxon>Megaviricetes</taxon>
        <taxon>Pimascovirales</taxon>
        <taxon>Iridoviridae</taxon>
        <taxon>Alphairidovirinae</taxon>
        <taxon>Ranavirus</taxon>
        <taxon>Frog virus 3</taxon>
    </lineage>
</organism>
<keyword id="KW-1185">Reference proteome</keyword>
<accession>Q6GZW2</accession>